<reference key="1">
    <citation type="journal article" date="2003" name="Nat. Biotechnol.">
        <title>The genome sequence of the entomopathogenic bacterium Photorhabdus luminescens.</title>
        <authorList>
            <person name="Duchaud E."/>
            <person name="Rusniok C."/>
            <person name="Frangeul L."/>
            <person name="Buchrieser C."/>
            <person name="Givaudan A."/>
            <person name="Taourit S."/>
            <person name="Bocs S."/>
            <person name="Boursaux-Eude C."/>
            <person name="Chandler M."/>
            <person name="Charles J.-F."/>
            <person name="Dassa E."/>
            <person name="Derose R."/>
            <person name="Derzelle S."/>
            <person name="Freyssinet G."/>
            <person name="Gaudriault S."/>
            <person name="Medigue C."/>
            <person name="Lanois A."/>
            <person name="Powell K."/>
            <person name="Siguier P."/>
            <person name="Vincent R."/>
            <person name="Wingate V."/>
            <person name="Zouine M."/>
            <person name="Glaser P."/>
            <person name="Boemare N."/>
            <person name="Danchin A."/>
            <person name="Kunst F."/>
        </authorList>
    </citation>
    <scope>NUCLEOTIDE SEQUENCE [LARGE SCALE GENOMIC DNA]</scope>
    <source>
        <strain>DSM 15139 / CIP 105565 / TT01</strain>
    </source>
</reference>
<evidence type="ECO:0000255" key="1">
    <source>
        <dbReference type="HAMAP-Rule" id="MF_00625"/>
    </source>
</evidence>
<gene>
    <name evidence="1" type="primary">selD</name>
    <name type="ordered locus">plu2551</name>
</gene>
<protein>
    <recommendedName>
        <fullName evidence="1">Selenide, water dikinase</fullName>
        <ecNumber evidence="1">2.7.9.3</ecNumber>
    </recommendedName>
    <alternativeName>
        <fullName evidence="1">Selenium donor protein</fullName>
    </alternativeName>
    <alternativeName>
        <fullName evidence="1">Selenophosphate synthase</fullName>
    </alternativeName>
</protein>
<organism>
    <name type="scientific">Photorhabdus laumondii subsp. laumondii (strain DSM 15139 / CIP 105565 / TT01)</name>
    <name type="common">Photorhabdus luminescens subsp. laumondii</name>
    <dbReference type="NCBI Taxonomy" id="243265"/>
    <lineage>
        <taxon>Bacteria</taxon>
        <taxon>Pseudomonadati</taxon>
        <taxon>Pseudomonadota</taxon>
        <taxon>Gammaproteobacteria</taxon>
        <taxon>Enterobacterales</taxon>
        <taxon>Morganellaceae</taxon>
        <taxon>Photorhabdus</taxon>
    </lineage>
</organism>
<dbReference type="EC" id="2.7.9.3" evidence="1"/>
<dbReference type="EMBL" id="BX571867">
    <property type="protein sequence ID" value="CAE14925.1"/>
    <property type="molecule type" value="Genomic_DNA"/>
</dbReference>
<dbReference type="RefSeq" id="WP_011146774.1">
    <property type="nucleotide sequence ID" value="NC_005126.1"/>
</dbReference>
<dbReference type="SMR" id="Q7N406"/>
<dbReference type="STRING" id="243265.plu2551"/>
<dbReference type="GeneID" id="48848812"/>
<dbReference type="KEGG" id="plu:plu2551"/>
<dbReference type="eggNOG" id="COG0709">
    <property type="taxonomic scope" value="Bacteria"/>
</dbReference>
<dbReference type="HOGENOM" id="CLU_032859_0_1_6"/>
<dbReference type="OrthoDB" id="9767928at2"/>
<dbReference type="Proteomes" id="UP000002514">
    <property type="component" value="Chromosome"/>
</dbReference>
<dbReference type="GO" id="GO:0005737">
    <property type="term" value="C:cytoplasm"/>
    <property type="evidence" value="ECO:0007669"/>
    <property type="project" value="TreeGrafter"/>
</dbReference>
<dbReference type="GO" id="GO:0005524">
    <property type="term" value="F:ATP binding"/>
    <property type="evidence" value="ECO:0007669"/>
    <property type="project" value="UniProtKB-UniRule"/>
</dbReference>
<dbReference type="GO" id="GO:0000287">
    <property type="term" value="F:magnesium ion binding"/>
    <property type="evidence" value="ECO:0007669"/>
    <property type="project" value="UniProtKB-UniRule"/>
</dbReference>
<dbReference type="GO" id="GO:0004756">
    <property type="term" value="F:selenide, water dikinase activity"/>
    <property type="evidence" value="ECO:0007669"/>
    <property type="project" value="UniProtKB-UniRule"/>
</dbReference>
<dbReference type="GO" id="GO:0016260">
    <property type="term" value="P:selenocysteine biosynthetic process"/>
    <property type="evidence" value="ECO:0007669"/>
    <property type="project" value="InterPro"/>
</dbReference>
<dbReference type="CDD" id="cd02195">
    <property type="entry name" value="SelD"/>
    <property type="match status" value="1"/>
</dbReference>
<dbReference type="FunFam" id="3.30.1330.10:FF:000003">
    <property type="entry name" value="Selenide, water dikinase"/>
    <property type="match status" value="1"/>
</dbReference>
<dbReference type="FunFam" id="3.90.650.10:FF:000004">
    <property type="entry name" value="Selenide, water dikinase"/>
    <property type="match status" value="1"/>
</dbReference>
<dbReference type="Gene3D" id="3.90.650.10">
    <property type="entry name" value="PurM-like C-terminal domain"/>
    <property type="match status" value="1"/>
</dbReference>
<dbReference type="Gene3D" id="3.30.1330.10">
    <property type="entry name" value="PurM-like, N-terminal domain"/>
    <property type="match status" value="1"/>
</dbReference>
<dbReference type="HAMAP" id="MF_00625">
    <property type="entry name" value="SelD"/>
    <property type="match status" value="1"/>
</dbReference>
<dbReference type="InterPro" id="IPR010918">
    <property type="entry name" value="PurM-like_C_dom"/>
</dbReference>
<dbReference type="InterPro" id="IPR036676">
    <property type="entry name" value="PurM-like_C_sf"/>
</dbReference>
<dbReference type="InterPro" id="IPR016188">
    <property type="entry name" value="PurM-like_N"/>
</dbReference>
<dbReference type="InterPro" id="IPR036921">
    <property type="entry name" value="PurM-like_N_sf"/>
</dbReference>
<dbReference type="InterPro" id="IPR023061">
    <property type="entry name" value="SelD_I"/>
</dbReference>
<dbReference type="InterPro" id="IPR004536">
    <property type="entry name" value="SPS/SelD"/>
</dbReference>
<dbReference type="NCBIfam" id="NF002098">
    <property type="entry name" value="PRK00943.1"/>
    <property type="match status" value="1"/>
</dbReference>
<dbReference type="NCBIfam" id="TIGR00476">
    <property type="entry name" value="selD"/>
    <property type="match status" value="1"/>
</dbReference>
<dbReference type="PANTHER" id="PTHR10256:SF0">
    <property type="entry name" value="INACTIVE SELENIDE, WATER DIKINASE-LIKE PROTEIN-RELATED"/>
    <property type="match status" value="1"/>
</dbReference>
<dbReference type="PANTHER" id="PTHR10256">
    <property type="entry name" value="SELENIDE, WATER DIKINASE"/>
    <property type="match status" value="1"/>
</dbReference>
<dbReference type="Pfam" id="PF00586">
    <property type="entry name" value="AIRS"/>
    <property type="match status" value="1"/>
</dbReference>
<dbReference type="Pfam" id="PF02769">
    <property type="entry name" value="AIRS_C"/>
    <property type="match status" value="1"/>
</dbReference>
<dbReference type="PIRSF" id="PIRSF036407">
    <property type="entry name" value="Selenphspht_syn"/>
    <property type="match status" value="1"/>
</dbReference>
<dbReference type="SUPFAM" id="SSF56042">
    <property type="entry name" value="PurM C-terminal domain-like"/>
    <property type="match status" value="1"/>
</dbReference>
<dbReference type="SUPFAM" id="SSF55326">
    <property type="entry name" value="PurM N-terminal domain-like"/>
    <property type="match status" value="1"/>
</dbReference>
<keyword id="KW-0067">ATP-binding</keyword>
<keyword id="KW-0418">Kinase</keyword>
<keyword id="KW-0460">Magnesium</keyword>
<keyword id="KW-0479">Metal-binding</keyword>
<keyword id="KW-0547">Nucleotide-binding</keyword>
<keyword id="KW-1185">Reference proteome</keyword>
<keyword id="KW-0711">Selenium</keyword>
<keyword id="KW-0808">Transferase</keyword>
<name>SELD_PHOLL</name>
<proteinExistence type="inferred from homology"/>
<comment type="function">
    <text evidence="1">Synthesizes selenophosphate from selenide and ATP.</text>
</comment>
<comment type="catalytic activity">
    <reaction evidence="1">
        <text>hydrogenselenide + ATP + H2O = selenophosphate + AMP + phosphate + 2 H(+)</text>
        <dbReference type="Rhea" id="RHEA:18737"/>
        <dbReference type="ChEBI" id="CHEBI:15377"/>
        <dbReference type="ChEBI" id="CHEBI:15378"/>
        <dbReference type="ChEBI" id="CHEBI:16144"/>
        <dbReference type="ChEBI" id="CHEBI:29317"/>
        <dbReference type="ChEBI" id="CHEBI:30616"/>
        <dbReference type="ChEBI" id="CHEBI:43474"/>
        <dbReference type="ChEBI" id="CHEBI:456215"/>
        <dbReference type="EC" id="2.7.9.3"/>
    </reaction>
</comment>
<comment type="cofactor">
    <cofactor evidence="1">
        <name>Mg(2+)</name>
        <dbReference type="ChEBI" id="CHEBI:18420"/>
    </cofactor>
    <text evidence="1">Binds 1 Mg(2+) ion per monomer.</text>
</comment>
<comment type="subunit">
    <text evidence="1">Homodimer.</text>
</comment>
<comment type="similarity">
    <text evidence="1">Belongs to the selenophosphate synthase 1 family. Class I subfamily.</text>
</comment>
<accession>Q7N406</accession>
<sequence length="347" mass="36687">MSTEVRLTQYSHGAGCGCKISPKVLETILHSEQEKFLDPHLLVGNETRDDAAVYDIGNGTGIISTTDFFMPIVDDPFDFGRIAATNAISDIYAMGGKPIMAIAILGWPIDKLAPEIARKVIEGGRAACKEAGIVLAGGHSIDAPEPIFGLAVTGIVNIDRVKQNSAAKVGSQLFLTKPLGIGVLTTAEKKGLLLPEHQGIAIETMCRLNKLGMDFAEVAGITAMTDVTGFGLLGHLSEICAGSGVQATLHFAKVPKLPEVESYIAKGCVPGGTGRNFDSYGHLIGEMTELQRKLLCDPQTSGGLLLAVLPEAMDEVKAIARCHGIELTAIGELSEQQSGRVLIEVNE</sequence>
<feature type="chain" id="PRO_0000127629" description="Selenide, water dikinase">
    <location>
        <begin position="1"/>
        <end position="347"/>
    </location>
</feature>
<feature type="active site" evidence="1">
    <location>
        <position position="16"/>
    </location>
</feature>
<feature type="binding site" description="in other chain" evidence="1">
    <location>
        <position position="19"/>
    </location>
    <ligand>
        <name>ATP</name>
        <dbReference type="ChEBI" id="CHEBI:30616"/>
        <note>ligand shared between dimeric partners</note>
    </ligand>
</feature>
<feature type="binding site" description="in other chain" evidence="1">
    <location>
        <begin position="47"/>
        <end position="49"/>
    </location>
    <ligand>
        <name>ATP</name>
        <dbReference type="ChEBI" id="CHEBI:30616"/>
        <note>ligand shared between dimeric partners</note>
    </ligand>
</feature>
<feature type="binding site" evidence="1">
    <location>
        <position position="50"/>
    </location>
    <ligand>
        <name>Mg(2+)</name>
        <dbReference type="ChEBI" id="CHEBI:18420"/>
    </ligand>
</feature>
<feature type="binding site" description="in other chain" evidence="1">
    <location>
        <position position="67"/>
    </location>
    <ligand>
        <name>ATP</name>
        <dbReference type="ChEBI" id="CHEBI:30616"/>
        <note>ligand shared between dimeric partners</note>
    </ligand>
</feature>
<feature type="binding site" description="in other chain" evidence="1">
    <location>
        <position position="90"/>
    </location>
    <ligand>
        <name>ATP</name>
        <dbReference type="ChEBI" id="CHEBI:30616"/>
        <note>ligand shared between dimeric partners</note>
    </ligand>
</feature>
<feature type="binding site" evidence="1">
    <location>
        <position position="90"/>
    </location>
    <ligand>
        <name>Mg(2+)</name>
        <dbReference type="ChEBI" id="CHEBI:18420"/>
    </ligand>
</feature>
<feature type="binding site" evidence="1">
    <location>
        <begin position="138"/>
        <end position="140"/>
    </location>
    <ligand>
        <name>ATP</name>
        <dbReference type="ChEBI" id="CHEBI:30616"/>
        <note>ligand shared between dimeric partners</note>
    </ligand>
</feature>
<feature type="binding site" evidence="1">
    <location>
        <position position="226"/>
    </location>
    <ligand>
        <name>Mg(2+)</name>
        <dbReference type="ChEBI" id="CHEBI:18420"/>
    </ligand>
</feature>
<feature type="site" description="Important for catalytic activity" evidence="1">
    <location>
        <position position="19"/>
    </location>
</feature>